<keyword id="KW-0067">ATP-binding</keyword>
<keyword id="KW-0997">Cell inner membrane</keyword>
<keyword id="KW-1003">Cell membrane</keyword>
<keyword id="KW-0472">Membrane</keyword>
<keyword id="KW-0547">Nucleotide-binding</keyword>
<keyword id="KW-0813">Transport</keyword>
<feature type="chain" id="PRO_0000286740" description="Putative 2-aminoethylphosphonate import ATP-binding protein PhnT">
    <location>
        <begin position="1"/>
        <end position="369"/>
    </location>
</feature>
<feature type="domain" description="ABC transporter" evidence="2">
    <location>
        <begin position="19"/>
        <end position="250"/>
    </location>
</feature>
<feature type="binding site" evidence="2">
    <location>
        <begin position="51"/>
        <end position="58"/>
    </location>
    <ligand>
        <name>ATP</name>
        <dbReference type="ChEBI" id="CHEBI:30616"/>
    </ligand>
</feature>
<dbReference type="EMBL" id="CP000026">
    <property type="protein sequence ID" value="AAV78180.1"/>
    <property type="molecule type" value="Genomic_DNA"/>
</dbReference>
<dbReference type="RefSeq" id="WP_000928782.1">
    <property type="nucleotide sequence ID" value="NC_006511.1"/>
</dbReference>
<dbReference type="SMR" id="Q5PFQ7"/>
<dbReference type="KEGG" id="spt:SPA2295"/>
<dbReference type="HOGENOM" id="CLU_000604_1_1_6"/>
<dbReference type="Proteomes" id="UP000008185">
    <property type="component" value="Chromosome"/>
</dbReference>
<dbReference type="GO" id="GO:0043190">
    <property type="term" value="C:ATP-binding cassette (ABC) transporter complex"/>
    <property type="evidence" value="ECO:0007669"/>
    <property type="project" value="InterPro"/>
</dbReference>
<dbReference type="GO" id="GO:0005524">
    <property type="term" value="F:ATP binding"/>
    <property type="evidence" value="ECO:0007669"/>
    <property type="project" value="UniProtKB-KW"/>
</dbReference>
<dbReference type="GO" id="GO:0016887">
    <property type="term" value="F:ATP hydrolysis activity"/>
    <property type="evidence" value="ECO:0007669"/>
    <property type="project" value="InterPro"/>
</dbReference>
<dbReference type="GO" id="GO:0022857">
    <property type="term" value="F:transmembrane transporter activity"/>
    <property type="evidence" value="ECO:0007669"/>
    <property type="project" value="InterPro"/>
</dbReference>
<dbReference type="FunFam" id="3.40.50.300:FF:000425">
    <property type="entry name" value="Probable ABC transporter, ATP-binding subunit"/>
    <property type="match status" value="1"/>
</dbReference>
<dbReference type="Gene3D" id="2.40.50.100">
    <property type="match status" value="1"/>
</dbReference>
<dbReference type="Gene3D" id="3.40.50.300">
    <property type="entry name" value="P-loop containing nucleotide triphosphate hydrolases"/>
    <property type="match status" value="1"/>
</dbReference>
<dbReference type="InterPro" id="IPR003593">
    <property type="entry name" value="AAA+_ATPase"/>
</dbReference>
<dbReference type="InterPro" id="IPR050093">
    <property type="entry name" value="ABC_SmlMolc_Importer"/>
</dbReference>
<dbReference type="InterPro" id="IPR003439">
    <property type="entry name" value="ABC_transporter-like_ATP-bd"/>
</dbReference>
<dbReference type="InterPro" id="IPR017871">
    <property type="entry name" value="ABC_transporter-like_CS"/>
</dbReference>
<dbReference type="InterPro" id="IPR017662">
    <property type="entry name" value="AminoethylPonate_ABC_PhnT"/>
</dbReference>
<dbReference type="InterPro" id="IPR008995">
    <property type="entry name" value="Mo/tungstate-bd_C_term_dom"/>
</dbReference>
<dbReference type="InterPro" id="IPR027417">
    <property type="entry name" value="P-loop_NTPase"/>
</dbReference>
<dbReference type="InterPro" id="IPR013611">
    <property type="entry name" value="Transp-assoc_OB_typ2"/>
</dbReference>
<dbReference type="NCBIfam" id="TIGR03258">
    <property type="entry name" value="PhnT"/>
    <property type="match status" value="1"/>
</dbReference>
<dbReference type="PANTHER" id="PTHR42781">
    <property type="entry name" value="SPERMIDINE/PUTRESCINE IMPORT ATP-BINDING PROTEIN POTA"/>
    <property type="match status" value="1"/>
</dbReference>
<dbReference type="PANTHER" id="PTHR42781:SF4">
    <property type="entry name" value="SPERMIDINE_PUTRESCINE IMPORT ATP-BINDING PROTEIN POTA"/>
    <property type="match status" value="1"/>
</dbReference>
<dbReference type="Pfam" id="PF00005">
    <property type="entry name" value="ABC_tran"/>
    <property type="match status" value="1"/>
</dbReference>
<dbReference type="Pfam" id="PF08402">
    <property type="entry name" value="TOBE_2"/>
    <property type="match status" value="1"/>
</dbReference>
<dbReference type="SMART" id="SM00382">
    <property type="entry name" value="AAA"/>
    <property type="match status" value="1"/>
</dbReference>
<dbReference type="SUPFAM" id="SSF50331">
    <property type="entry name" value="MOP-like"/>
    <property type="match status" value="1"/>
</dbReference>
<dbReference type="SUPFAM" id="SSF52540">
    <property type="entry name" value="P-loop containing nucleoside triphosphate hydrolases"/>
    <property type="match status" value="1"/>
</dbReference>
<dbReference type="PROSITE" id="PS00211">
    <property type="entry name" value="ABC_TRANSPORTER_1"/>
    <property type="match status" value="1"/>
</dbReference>
<dbReference type="PROSITE" id="PS50893">
    <property type="entry name" value="ABC_TRANSPORTER_2"/>
    <property type="match status" value="1"/>
</dbReference>
<comment type="function">
    <text evidence="1">Probably part of the PhnSTUV complex (TC 3.A.1.11.5) involved in 2-aminoethylphosphonate import. Probably responsible for energy coupling to the transport system (By similarity).</text>
</comment>
<comment type="subcellular location">
    <subcellularLocation>
        <location evidence="1">Cell inner membrane</location>
        <topology evidence="1">Peripheral membrane protein</topology>
    </subcellularLocation>
</comment>
<comment type="similarity">
    <text evidence="3">Belongs to the ABC transporter superfamily. 2-aminoethylphosphonate importer (TC 3.A.1.11.5) family.</text>
</comment>
<evidence type="ECO:0000250" key="1"/>
<evidence type="ECO:0000255" key="2">
    <source>
        <dbReference type="PROSITE-ProRule" id="PRU00434"/>
    </source>
</evidence>
<evidence type="ECO:0000305" key="3"/>
<gene>
    <name type="primary">phnT</name>
    <name type="ordered locus">SPA2295</name>
</gene>
<organism>
    <name type="scientific">Salmonella paratyphi A (strain ATCC 9150 / SARB42)</name>
    <dbReference type="NCBI Taxonomy" id="295319"/>
    <lineage>
        <taxon>Bacteria</taxon>
        <taxon>Pseudomonadati</taxon>
        <taxon>Pseudomonadota</taxon>
        <taxon>Gammaproteobacteria</taxon>
        <taxon>Enterobacterales</taxon>
        <taxon>Enterobacteriaceae</taxon>
        <taxon>Salmonella</taxon>
    </lineage>
</organism>
<proteinExistence type="inferred from homology"/>
<name>PHNT_SALPA</name>
<sequence length="369" mass="40063">MLMKTTAAHAPASQGTSGIVLDSLRVAYHGNVVLKPLSLTIEPGEVLALIGPSGSGKTTVLRAVAGFVQPAGGRILIGDTDVTHLPPYKRGLAMVVQNYALFPHLKVEDNVAFGLRAQKQPKALINERVTQALKTVGMSDYATRYPHQLSGGQQQRVAIARAIAVRPRVLLLDEPLSALDAQIRHNMVEEIARLHRELPELTILYVTHDQTEALTLADKIGIMKDGSLIAHGETRALYHHPPNRFAAEFLGRANILSAIALGITEVPGLVDVSCGGAVIRAFSQGSHHGYNKLLCIRPQHLSLTPRSAYSNRFNATLQSVHWQGDLTHLLCDVAGETVRMVLTHVNPLPRVGDKLALWFEPDDAVLIEV</sequence>
<protein>
    <recommendedName>
        <fullName>Putative 2-aminoethylphosphonate import ATP-binding protein PhnT</fullName>
    </recommendedName>
</protein>
<reference key="1">
    <citation type="journal article" date="2004" name="Nat. Genet.">
        <title>Comparison of genome degradation in Paratyphi A and Typhi, human-restricted serovars of Salmonella enterica that cause typhoid.</title>
        <authorList>
            <person name="McClelland M."/>
            <person name="Sanderson K.E."/>
            <person name="Clifton S.W."/>
            <person name="Latreille P."/>
            <person name="Porwollik S."/>
            <person name="Sabo A."/>
            <person name="Meyer R."/>
            <person name="Bieri T."/>
            <person name="Ozersky P."/>
            <person name="McLellan M."/>
            <person name="Harkins C.R."/>
            <person name="Wang C."/>
            <person name="Nguyen C."/>
            <person name="Berghoff A."/>
            <person name="Elliott G."/>
            <person name="Kohlberg S."/>
            <person name="Strong C."/>
            <person name="Du F."/>
            <person name="Carter J."/>
            <person name="Kremizki C."/>
            <person name="Layman D."/>
            <person name="Leonard S."/>
            <person name="Sun H."/>
            <person name="Fulton L."/>
            <person name="Nash W."/>
            <person name="Miner T."/>
            <person name="Minx P."/>
            <person name="Delehaunty K."/>
            <person name="Fronick C."/>
            <person name="Magrini V."/>
            <person name="Nhan M."/>
            <person name="Warren W."/>
            <person name="Florea L."/>
            <person name="Spieth J."/>
            <person name="Wilson R.K."/>
        </authorList>
    </citation>
    <scope>NUCLEOTIDE SEQUENCE [LARGE SCALE GENOMIC DNA]</scope>
    <source>
        <strain>ATCC 9150 / SARB42</strain>
    </source>
</reference>
<accession>Q5PFQ7</accession>